<accession>B4TXA5</accession>
<proteinExistence type="inferred from homology"/>
<comment type="function">
    <text evidence="1">Involved in the biosynthesis of the chorismate, which leads to the biosynthesis of aromatic amino acids. Catalyzes the reversible NADPH linked reduction of 3-dehydroshikimate (DHSA) to yield shikimate (SA).</text>
</comment>
<comment type="catalytic activity">
    <reaction evidence="1">
        <text>shikimate + NADP(+) = 3-dehydroshikimate + NADPH + H(+)</text>
        <dbReference type="Rhea" id="RHEA:17737"/>
        <dbReference type="ChEBI" id="CHEBI:15378"/>
        <dbReference type="ChEBI" id="CHEBI:16630"/>
        <dbReference type="ChEBI" id="CHEBI:36208"/>
        <dbReference type="ChEBI" id="CHEBI:57783"/>
        <dbReference type="ChEBI" id="CHEBI:58349"/>
        <dbReference type="EC" id="1.1.1.25"/>
    </reaction>
</comment>
<comment type="pathway">
    <text evidence="1">Metabolic intermediate biosynthesis; chorismate biosynthesis; chorismate from D-erythrose 4-phosphate and phosphoenolpyruvate: step 4/7.</text>
</comment>
<comment type="subunit">
    <text evidence="1">Homodimer.</text>
</comment>
<comment type="similarity">
    <text evidence="1">Belongs to the shikimate dehydrogenase family.</text>
</comment>
<evidence type="ECO:0000255" key="1">
    <source>
        <dbReference type="HAMAP-Rule" id="MF_00222"/>
    </source>
</evidence>
<gene>
    <name evidence="1" type="primary">aroE</name>
    <name type="ordered locus">SeSA_A3598</name>
</gene>
<name>AROE_SALSV</name>
<dbReference type="EC" id="1.1.1.25" evidence="1"/>
<dbReference type="EMBL" id="CP001127">
    <property type="protein sequence ID" value="ACF89969.1"/>
    <property type="molecule type" value="Genomic_DNA"/>
</dbReference>
<dbReference type="RefSeq" id="WP_000451207.1">
    <property type="nucleotide sequence ID" value="NC_011094.1"/>
</dbReference>
<dbReference type="SMR" id="B4TXA5"/>
<dbReference type="KEGG" id="sew:SeSA_A3598"/>
<dbReference type="HOGENOM" id="CLU_044063_2_1_6"/>
<dbReference type="UniPathway" id="UPA00053">
    <property type="reaction ID" value="UER00087"/>
</dbReference>
<dbReference type="Proteomes" id="UP000001865">
    <property type="component" value="Chromosome"/>
</dbReference>
<dbReference type="GO" id="GO:0005829">
    <property type="term" value="C:cytosol"/>
    <property type="evidence" value="ECO:0007669"/>
    <property type="project" value="TreeGrafter"/>
</dbReference>
<dbReference type="GO" id="GO:0050661">
    <property type="term" value="F:NADP binding"/>
    <property type="evidence" value="ECO:0007669"/>
    <property type="project" value="InterPro"/>
</dbReference>
<dbReference type="GO" id="GO:0004764">
    <property type="term" value="F:shikimate 3-dehydrogenase (NADP+) activity"/>
    <property type="evidence" value="ECO:0007669"/>
    <property type="project" value="UniProtKB-UniRule"/>
</dbReference>
<dbReference type="GO" id="GO:0008652">
    <property type="term" value="P:amino acid biosynthetic process"/>
    <property type="evidence" value="ECO:0007669"/>
    <property type="project" value="UniProtKB-KW"/>
</dbReference>
<dbReference type="GO" id="GO:0009073">
    <property type="term" value="P:aromatic amino acid family biosynthetic process"/>
    <property type="evidence" value="ECO:0007669"/>
    <property type="project" value="UniProtKB-KW"/>
</dbReference>
<dbReference type="GO" id="GO:0009423">
    <property type="term" value="P:chorismate biosynthetic process"/>
    <property type="evidence" value="ECO:0007669"/>
    <property type="project" value="UniProtKB-UniRule"/>
</dbReference>
<dbReference type="GO" id="GO:0019632">
    <property type="term" value="P:shikimate metabolic process"/>
    <property type="evidence" value="ECO:0007669"/>
    <property type="project" value="InterPro"/>
</dbReference>
<dbReference type="CDD" id="cd01065">
    <property type="entry name" value="NAD_bind_Shikimate_DH"/>
    <property type="match status" value="1"/>
</dbReference>
<dbReference type="FunFam" id="3.40.50.10860:FF:000006">
    <property type="entry name" value="Shikimate dehydrogenase (NADP(+))"/>
    <property type="match status" value="1"/>
</dbReference>
<dbReference type="FunFam" id="3.40.50.720:FF:000104">
    <property type="entry name" value="Shikimate dehydrogenase (NADP(+))"/>
    <property type="match status" value="1"/>
</dbReference>
<dbReference type="Gene3D" id="3.40.50.10860">
    <property type="entry name" value="Leucine Dehydrogenase, chain A, domain 1"/>
    <property type="match status" value="1"/>
</dbReference>
<dbReference type="Gene3D" id="3.40.50.720">
    <property type="entry name" value="NAD(P)-binding Rossmann-like Domain"/>
    <property type="match status" value="1"/>
</dbReference>
<dbReference type="HAMAP" id="MF_00222">
    <property type="entry name" value="Shikimate_DH_AroE"/>
    <property type="match status" value="1"/>
</dbReference>
<dbReference type="InterPro" id="IPR046346">
    <property type="entry name" value="Aminoacid_DH-like_N_sf"/>
</dbReference>
<dbReference type="InterPro" id="IPR036291">
    <property type="entry name" value="NAD(P)-bd_dom_sf"/>
</dbReference>
<dbReference type="InterPro" id="IPR041121">
    <property type="entry name" value="SDH_C"/>
</dbReference>
<dbReference type="InterPro" id="IPR011342">
    <property type="entry name" value="Shikimate_DH"/>
</dbReference>
<dbReference type="InterPro" id="IPR013708">
    <property type="entry name" value="Shikimate_DH-bd_N"/>
</dbReference>
<dbReference type="InterPro" id="IPR022893">
    <property type="entry name" value="Shikimate_DH_fam"/>
</dbReference>
<dbReference type="InterPro" id="IPR006151">
    <property type="entry name" value="Shikm_DH/Glu-tRNA_Rdtase"/>
</dbReference>
<dbReference type="NCBIfam" id="TIGR00507">
    <property type="entry name" value="aroE"/>
    <property type="match status" value="1"/>
</dbReference>
<dbReference type="NCBIfam" id="NF001310">
    <property type="entry name" value="PRK00258.1-2"/>
    <property type="match status" value="1"/>
</dbReference>
<dbReference type="PANTHER" id="PTHR21089:SF1">
    <property type="entry name" value="BIFUNCTIONAL 3-DEHYDROQUINATE DEHYDRATASE_SHIKIMATE DEHYDROGENASE, CHLOROPLASTIC"/>
    <property type="match status" value="1"/>
</dbReference>
<dbReference type="PANTHER" id="PTHR21089">
    <property type="entry name" value="SHIKIMATE DEHYDROGENASE"/>
    <property type="match status" value="1"/>
</dbReference>
<dbReference type="Pfam" id="PF18317">
    <property type="entry name" value="SDH_C"/>
    <property type="match status" value="1"/>
</dbReference>
<dbReference type="Pfam" id="PF01488">
    <property type="entry name" value="Shikimate_DH"/>
    <property type="match status" value="1"/>
</dbReference>
<dbReference type="Pfam" id="PF08501">
    <property type="entry name" value="Shikimate_dh_N"/>
    <property type="match status" value="1"/>
</dbReference>
<dbReference type="SUPFAM" id="SSF53223">
    <property type="entry name" value="Aminoacid dehydrogenase-like, N-terminal domain"/>
    <property type="match status" value="1"/>
</dbReference>
<dbReference type="SUPFAM" id="SSF51735">
    <property type="entry name" value="NAD(P)-binding Rossmann-fold domains"/>
    <property type="match status" value="1"/>
</dbReference>
<feature type="chain" id="PRO_1000100139" description="Shikimate dehydrogenase (NADP(+))">
    <location>
        <begin position="1"/>
        <end position="272"/>
    </location>
</feature>
<feature type="active site" description="Proton acceptor" evidence="1">
    <location>
        <position position="65"/>
    </location>
</feature>
<feature type="binding site" evidence="1">
    <location>
        <begin position="14"/>
        <end position="16"/>
    </location>
    <ligand>
        <name>shikimate</name>
        <dbReference type="ChEBI" id="CHEBI:36208"/>
    </ligand>
</feature>
<feature type="binding site" evidence="1">
    <location>
        <position position="61"/>
    </location>
    <ligand>
        <name>shikimate</name>
        <dbReference type="ChEBI" id="CHEBI:36208"/>
    </ligand>
</feature>
<feature type="binding site" evidence="1">
    <location>
        <position position="77"/>
    </location>
    <ligand>
        <name>NADP(+)</name>
        <dbReference type="ChEBI" id="CHEBI:58349"/>
    </ligand>
</feature>
<feature type="binding site" evidence="1">
    <location>
        <position position="86"/>
    </location>
    <ligand>
        <name>shikimate</name>
        <dbReference type="ChEBI" id="CHEBI:36208"/>
    </ligand>
</feature>
<feature type="binding site" evidence="1">
    <location>
        <position position="102"/>
    </location>
    <ligand>
        <name>shikimate</name>
        <dbReference type="ChEBI" id="CHEBI:36208"/>
    </ligand>
</feature>
<feature type="binding site" evidence="1">
    <location>
        <begin position="126"/>
        <end position="130"/>
    </location>
    <ligand>
        <name>NADP(+)</name>
        <dbReference type="ChEBI" id="CHEBI:58349"/>
    </ligand>
</feature>
<feature type="binding site" evidence="1">
    <location>
        <begin position="149"/>
        <end position="154"/>
    </location>
    <ligand>
        <name>NADP(+)</name>
        <dbReference type="ChEBI" id="CHEBI:58349"/>
    </ligand>
</feature>
<feature type="binding site" evidence="1">
    <location>
        <position position="213"/>
    </location>
    <ligand>
        <name>NADP(+)</name>
        <dbReference type="ChEBI" id="CHEBI:58349"/>
    </ligand>
</feature>
<feature type="binding site" evidence="1">
    <location>
        <position position="215"/>
    </location>
    <ligand>
        <name>shikimate</name>
        <dbReference type="ChEBI" id="CHEBI:36208"/>
    </ligand>
</feature>
<feature type="binding site" evidence="1">
    <location>
        <position position="237"/>
    </location>
    <ligand>
        <name>NADP(+)</name>
        <dbReference type="ChEBI" id="CHEBI:58349"/>
    </ligand>
</feature>
<keyword id="KW-0028">Amino-acid biosynthesis</keyword>
<keyword id="KW-0057">Aromatic amino acid biosynthesis</keyword>
<keyword id="KW-0521">NADP</keyword>
<keyword id="KW-0560">Oxidoreductase</keyword>
<protein>
    <recommendedName>
        <fullName evidence="1">Shikimate dehydrogenase (NADP(+))</fullName>
        <shortName evidence="1">SDH</shortName>
        <ecNumber evidence="1">1.1.1.25</ecNumber>
    </recommendedName>
</protein>
<reference key="1">
    <citation type="journal article" date="2011" name="J. Bacteriol.">
        <title>Comparative genomics of 28 Salmonella enterica isolates: evidence for CRISPR-mediated adaptive sublineage evolution.</title>
        <authorList>
            <person name="Fricke W.F."/>
            <person name="Mammel M.K."/>
            <person name="McDermott P.F."/>
            <person name="Tartera C."/>
            <person name="White D.G."/>
            <person name="Leclerc J.E."/>
            <person name="Ravel J."/>
            <person name="Cebula T.A."/>
        </authorList>
    </citation>
    <scope>NUCLEOTIDE SEQUENCE [LARGE SCALE GENOMIC DNA]</scope>
    <source>
        <strain>CVM19633</strain>
    </source>
</reference>
<organism>
    <name type="scientific">Salmonella schwarzengrund (strain CVM19633)</name>
    <dbReference type="NCBI Taxonomy" id="439843"/>
    <lineage>
        <taxon>Bacteria</taxon>
        <taxon>Pseudomonadati</taxon>
        <taxon>Pseudomonadota</taxon>
        <taxon>Gammaproteobacteria</taxon>
        <taxon>Enterobacterales</taxon>
        <taxon>Enterobacteriaceae</taxon>
        <taxon>Salmonella</taxon>
    </lineage>
</organism>
<sequence>METYAVFGNPIAHSKSPFIHQQFAQQLDIVHPYGRVLAPINNFINTLDAFFAAGGKGANITVPFKEEAFARSDELTERASLAGAVNTLKRLEDGRLLGDNTDGIGLLSDLKRLNFIRPGWRILLIGAGGASRGVLLPLLSLDCAVTITNRTASRAEALAKIFAHTGSVHATDMDKLHGCEFDLIINATSSGIRGEIPAIPASLIHPSLCCYDMFYQKGNTPFLSWCVQQGAKRYADGLGMLVGQAAHAVLLWHGVLPQVEPVIELLQQELLA</sequence>